<reference key="1">
    <citation type="journal article" date="2009" name="J. Bacteriol.">
        <title>Genomic sequencing reveals regulatory mutations and recombinational events in the widely used MC4100 lineage of Escherichia coli K-12.</title>
        <authorList>
            <person name="Ferenci T."/>
            <person name="Zhou Z."/>
            <person name="Betteridge T."/>
            <person name="Ren Y."/>
            <person name="Liu Y."/>
            <person name="Feng L."/>
            <person name="Reeves P.R."/>
            <person name="Wang L."/>
        </authorList>
    </citation>
    <scope>NUCLEOTIDE SEQUENCE [LARGE SCALE GENOMIC DNA]</scope>
    <source>
        <strain>K12 / MC4100 / BW2952</strain>
    </source>
</reference>
<name>AROE_ECOBW</name>
<sequence>METYAVFGNPIAHSKSPFIHQQFAQQLNIEHPYGRVLAPINDFINTLNAFFSAGGKGANVTVPFKEEAFARADELTERAALAGAVNTLMRLEDGRLLGDNTDGVGLLSDLERLSFIRPGLRILLIGAGGASRGVLLPLLSLDCAVTITNRTVSRAEELAKLFAHTGSIQALSMDELEGHEFDLIINATSSGISGDIPAIPSSLIHPGIYCYDMFYQKGKTPFLAWCEQRGSKRNADGLGMLVAQAAHAFLLWHGVLPDVEPVIKQLQEELSA</sequence>
<protein>
    <recommendedName>
        <fullName evidence="1">Shikimate dehydrogenase (NADP(+))</fullName>
        <shortName evidence="1">SDH</shortName>
        <ecNumber evidence="1">1.1.1.25</ecNumber>
    </recommendedName>
</protein>
<proteinExistence type="inferred from homology"/>
<organism>
    <name type="scientific">Escherichia coli (strain K12 / MC4100 / BW2952)</name>
    <dbReference type="NCBI Taxonomy" id="595496"/>
    <lineage>
        <taxon>Bacteria</taxon>
        <taxon>Pseudomonadati</taxon>
        <taxon>Pseudomonadota</taxon>
        <taxon>Gammaproteobacteria</taxon>
        <taxon>Enterobacterales</taxon>
        <taxon>Enterobacteriaceae</taxon>
        <taxon>Escherichia</taxon>
    </lineage>
</organism>
<dbReference type="EC" id="1.1.1.25" evidence="1"/>
<dbReference type="EMBL" id="CP001396">
    <property type="protein sequence ID" value="ACR62741.1"/>
    <property type="molecule type" value="Genomic_DNA"/>
</dbReference>
<dbReference type="RefSeq" id="WP_000451243.1">
    <property type="nucleotide sequence ID" value="NC_012759.1"/>
</dbReference>
<dbReference type="SMR" id="C4ZUD6"/>
<dbReference type="KEGG" id="ebw:BWG_2972"/>
<dbReference type="HOGENOM" id="CLU_044063_2_1_6"/>
<dbReference type="UniPathway" id="UPA00053">
    <property type="reaction ID" value="UER00087"/>
</dbReference>
<dbReference type="GO" id="GO:0005829">
    <property type="term" value="C:cytosol"/>
    <property type="evidence" value="ECO:0007669"/>
    <property type="project" value="TreeGrafter"/>
</dbReference>
<dbReference type="GO" id="GO:0050661">
    <property type="term" value="F:NADP binding"/>
    <property type="evidence" value="ECO:0007669"/>
    <property type="project" value="InterPro"/>
</dbReference>
<dbReference type="GO" id="GO:0004764">
    <property type="term" value="F:shikimate 3-dehydrogenase (NADP+) activity"/>
    <property type="evidence" value="ECO:0007669"/>
    <property type="project" value="UniProtKB-UniRule"/>
</dbReference>
<dbReference type="GO" id="GO:0008652">
    <property type="term" value="P:amino acid biosynthetic process"/>
    <property type="evidence" value="ECO:0007669"/>
    <property type="project" value="UniProtKB-KW"/>
</dbReference>
<dbReference type="GO" id="GO:0009073">
    <property type="term" value="P:aromatic amino acid family biosynthetic process"/>
    <property type="evidence" value="ECO:0007669"/>
    <property type="project" value="UniProtKB-KW"/>
</dbReference>
<dbReference type="GO" id="GO:0009423">
    <property type="term" value="P:chorismate biosynthetic process"/>
    <property type="evidence" value="ECO:0007669"/>
    <property type="project" value="UniProtKB-UniRule"/>
</dbReference>
<dbReference type="GO" id="GO:0019632">
    <property type="term" value="P:shikimate metabolic process"/>
    <property type="evidence" value="ECO:0007669"/>
    <property type="project" value="InterPro"/>
</dbReference>
<dbReference type="CDD" id="cd01065">
    <property type="entry name" value="NAD_bind_Shikimate_DH"/>
    <property type="match status" value="1"/>
</dbReference>
<dbReference type="FunFam" id="3.40.50.10860:FF:000006">
    <property type="entry name" value="Shikimate dehydrogenase (NADP(+))"/>
    <property type="match status" value="1"/>
</dbReference>
<dbReference type="FunFam" id="3.40.50.720:FF:000104">
    <property type="entry name" value="Shikimate dehydrogenase (NADP(+))"/>
    <property type="match status" value="1"/>
</dbReference>
<dbReference type="Gene3D" id="3.40.50.10860">
    <property type="entry name" value="Leucine Dehydrogenase, chain A, domain 1"/>
    <property type="match status" value="1"/>
</dbReference>
<dbReference type="Gene3D" id="3.40.50.720">
    <property type="entry name" value="NAD(P)-binding Rossmann-like Domain"/>
    <property type="match status" value="1"/>
</dbReference>
<dbReference type="HAMAP" id="MF_00222">
    <property type="entry name" value="Shikimate_DH_AroE"/>
    <property type="match status" value="1"/>
</dbReference>
<dbReference type="InterPro" id="IPR046346">
    <property type="entry name" value="Aminoacid_DH-like_N_sf"/>
</dbReference>
<dbReference type="InterPro" id="IPR036291">
    <property type="entry name" value="NAD(P)-bd_dom_sf"/>
</dbReference>
<dbReference type="InterPro" id="IPR041121">
    <property type="entry name" value="SDH_C"/>
</dbReference>
<dbReference type="InterPro" id="IPR011342">
    <property type="entry name" value="Shikimate_DH"/>
</dbReference>
<dbReference type="InterPro" id="IPR013708">
    <property type="entry name" value="Shikimate_DH-bd_N"/>
</dbReference>
<dbReference type="InterPro" id="IPR022893">
    <property type="entry name" value="Shikimate_DH_fam"/>
</dbReference>
<dbReference type="InterPro" id="IPR006151">
    <property type="entry name" value="Shikm_DH/Glu-tRNA_Rdtase"/>
</dbReference>
<dbReference type="NCBIfam" id="TIGR00507">
    <property type="entry name" value="aroE"/>
    <property type="match status" value="1"/>
</dbReference>
<dbReference type="NCBIfam" id="NF001310">
    <property type="entry name" value="PRK00258.1-2"/>
    <property type="match status" value="1"/>
</dbReference>
<dbReference type="PANTHER" id="PTHR21089:SF1">
    <property type="entry name" value="BIFUNCTIONAL 3-DEHYDROQUINATE DEHYDRATASE_SHIKIMATE DEHYDROGENASE, CHLOROPLASTIC"/>
    <property type="match status" value="1"/>
</dbReference>
<dbReference type="PANTHER" id="PTHR21089">
    <property type="entry name" value="SHIKIMATE DEHYDROGENASE"/>
    <property type="match status" value="1"/>
</dbReference>
<dbReference type="Pfam" id="PF18317">
    <property type="entry name" value="SDH_C"/>
    <property type="match status" value="1"/>
</dbReference>
<dbReference type="Pfam" id="PF01488">
    <property type="entry name" value="Shikimate_DH"/>
    <property type="match status" value="1"/>
</dbReference>
<dbReference type="Pfam" id="PF08501">
    <property type="entry name" value="Shikimate_dh_N"/>
    <property type="match status" value="1"/>
</dbReference>
<dbReference type="SUPFAM" id="SSF53223">
    <property type="entry name" value="Aminoacid dehydrogenase-like, N-terminal domain"/>
    <property type="match status" value="1"/>
</dbReference>
<dbReference type="SUPFAM" id="SSF51735">
    <property type="entry name" value="NAD(P)-binding Rossmann-fold domains"/>
    <property type="match status" value="1"/>
</dbReference>
<comment type="function">
    <text evidence="1">Involved in the biosynthesis of the chorismate, which leads to the biosynthesis of aromatic amino acids. Catalyzes the reversible NADPH linked reduction of 3-dehydroshikimate (DHSA) to yield shikimate (SA).</text>
</comment>
<comment type="catalytic activity">
    <reaction evidence="1">
        <text>shikimate + NADP(+) = 3-dehydroshikimate + NADPH + H(+)</text>
        <dbReference type="Rhea" id="RHEA:17737"/>
        <dbReference type="ChEBI" id="CHEBI:15378"/>
        <dbReference type="ChEBI" id="CHEBI:16630"/>
        <dbReference type="ChEBI" id="CHEBI:36208"/>
        <dbReference type="ChEBI" id="CHEBI:57783"/>
        <dbReference type="ChEBI" id="CHEBI:58349"/>
        <dbReference type="EC" id="1.1.1.25"/>
    </reaction>
</comment>
<comment type="pathway">
    <text evidence="1">Metabolic intermediate biosynthesis; chorismate biosynthesis; chorismate from D-erythrose 4-phosphate and phosphoenolpyruvate: step 4/7.</text>
</comment>
<comment type="subunit">
    <text evidence="1">Homodimer.</text>
</comment>
<comment type="similarity">
    <text evidence="1">Belongs to the shikimate dehydrogenase family.</text>
</comment>
<gene>
    <name evidence="1" type="primary">aroE</name>
    <name type="ordered locus">BWG_2972</name>
</gene>
<keyword id="KW-0028">Amino-acid biosynthesis</keyword>
<keyword id="KW-0057">Aromatic amino acid biosynthesis</keyword>
<keyword id="KW-0521">NADP</keyword>
<keyword id="KW-0560">Oxidoreductase</keyword>
<evidence type="ECO:0000255" key="1">
    <source>
        <dbReference type="HAMAP-Rule" id="MF_00222"/>
    </source>
</evidence>
<accession>C4ZUD6</accession>
<feature type="chain" id="PRO_1000204261" description="Shikimate dehydrogenase (NADP(+))">
    <location>
        <begin position="1"/>
        <end position="272"/>
    </location>
</feature>
<feature type="active site" description="Proton acceptor" evidence="1">
    <location>
        <position position="65"/>
    </location>
</feature>
<feature type="binding site" evidence="1">
    <location>
        <begin position="14"/>
        <end position="16"/>
    </location>
    <ligand>
        <name>shikimate</name>
        <dbReference type="ChEBI" id="CHEBI:36208"/>
    </ligand>
</feature>
<feature type="binding site" evidence="1">
    <location>
        <position position="61"/>
    </location>
    <ligand>
        <name>shikimate</name>
        <dbReference type="ChEBI" id="CHEBI:36208"/>
    </ligand>
</feature>
<feature type="binding site" evidence="1">
    <location>
        <position position="77"/>
    </location>
    <ligand>
        <name>NADP(+)</name>
        <dbReference type="ChEBI" id="CHEBI:58349"/>
    </ligand>
</feature>
<feature type="binding site" evidence="1">
    <location>
        <position position="86"/>
    </location>
    <ligand>
        <name>shikimate</name>
        <dbReference type="ChEBI" id="CHEBI:36208"/>
    </ligand>
</feature>
<feature type="binding site" evidence="1">
    <location>
        <position position="102"/>
    </location>
    <ligand>
        <name>shikimate</name>
        <dbReference type="ChEBI" id="CHEBI:36208"/>
    </ligand>
</feature>
<feature type="binding site" evidence="1">
    <location>
        <begin position="126"/>
        <end position="130"/>
    </location>
    <ligand>
        <name>NADP(+)</name>
        <dbReference type="ChEBI" id="CHEBI:58349"/>
    </ligand>
</feature>
<feature type="binding site" evidence="1">
    <location>
        <begin position="149"/>
        <end position="154"/>
    </location>
    <ligand>
        <name>NADP(+)</name>
        <dbReference type="ChEBI" id="CHEBI:58349"/>
    </ligand>
</feature>
<feature type="binding site" evidence="1">
    <location>
        <position position="213"/>
    </location>
    <ligand>
        <name>NADP(+)</name>
        <dbReference type="ChEBI" id="CHEBI:58349"/>
    </ligand>
</feature>
<feature type="binding site" evidence="1">
    <location>
        <position position="215"/>
    </location>
    <ligand>
        <name>shikimate</name>
        <dbReference type="ChEBI" id="CHEBI:36208"/>
    </ligand>
</feature>
<feature type="binding site" evidence="1">
    <location>
        <position position="237"/>
    </location>
    <ligand>
        <name>NADP(+)</name>
        <dbReference type="ChEBI" id="CHEBI:58349"/>
    </ligand>
</feature>